<accession>Q3UYC0</accession>
<accession>Q3UD05</accession>
<accession>Q3V3H5</accession>
<accession>Q3V3Y7</accession>
<accession>Q571C9</accession>
<accession>Q7TMU7</accession>
<accession>Q8BYE6</accession>
<comment type="function">
    <text evidence="2">Dephosphorylates CDKN1B at 'Thr-187', thus removing a signal for proteasomal degradation.</text>
</comment>
<comment type="catalytic activity">
    <reaction>
        <text>O-phospho-L-seryl-[protein] + H2O = L-seryl-[protein] + phosphate</text>
        <dbReference type="Rhea" id="RHEA:20629"/>
        <dbReference type="Rhea" id="RHEA-COMP:9863"/>
        <dbReference type="Rhea" id="RHEA-COMP:11604"/>
        <dbReference type="ChEBI" id="CHEBI:15377"/>
        <dbReference type="ChEBI" id="CHEBI:29999"/>
        <dbReference type="ChEBI" id="CHEBI:43474"/>
        <dbReference type="ChEBI" id="CHEBI:83421"/>
        <dbReference type="EC" id="3.1.3.16"/>
    </reaction>
</comment>
<comment type="catalytic activity">
    <reaction>
        <text>O-phospho-L-threonyl-[protein] + H2O = L-threonyl-[protein] + phosphate</text>
        <dbReference type="Rhea" id="RHEA:47004"/>
        <dbReference type="Rhea" id="RHEA-COMP:11060"/>
        <dbReference type="Rhea" id="RHEA-COMP:11605"/>
        <dbReference type="ChEBI" id="CHEBI:15377"/>
        <dbReference type="ChEBI" id="CHEBI:30013"/>
        <dbReference type="ChEBI" id="CHEBI:43474"/>
        <dbReference type="ChEBI" id="CHEBI:61977"/>
        <dbReference type="EC" id="3.1.3.16"/>
    </reaction>
</comment>
<comment type="subcellular location">
    <subcellularLocation>
        <location evidence="2">Nucleus</location>
    </subcellularLocation>
    <subcellularLocation>
        <location evidence="2">Cytoplasm</location>
    </subcellularLocation>
</comment>
<comment type="alternative products">
    <event type="alternative splicing"/>
    <isoform>
        <id>Q3UYC0-1</id>
        <name>1</name>
        <sequence type="displayed"/>
    </isoform>
    <isoform>
        <id>Q3UYC0-2</id>
        <name>2</name>
        <sequence type="described" ref="VSP_025121 VSP_025122"/>
    </isoform>
</comment>
<comment type="similarity">
    <text evidence="6">Belongs to the PP2C family.</text>
</comment>
<comment type="sequence caution" evidence="6">
    <conflict type="erroneous initiation">
        <sequence resource="EMBL-CDS" id="BAD90185"/>
    </conflict>
</comment>
<comment type="sequence caution" evidence="6">
    <conflict type="erroneous initiation">
        <sequence resource="EMBL-CDS" id="BAE29457"/>
    </conflict>
</comment>
<comment type="sequence caution" evidence="6">
    <conflict type="erroneous initiation">
        <sequence resource="EMBL-CDS" id="BAE43270"/>
    </conflict>
</comment>
<dbReference type="EC" id="3.1.3.16"/>
<dbReference type="EMBL" id="AK029461">
    <property type="protein sequence ID" value="BAE43270.1"/>
    <property type="status" value="ALT_INIT"/>
    <property type="molecule type" value="mRNA"/>
</dbReference>
<dbReference type="EMBL" id="AK040194">
    <property type="protein sequence ID" value="BAC30536.1"/>
    <property type="molecule type" value="mRNA"/>
</dbReference>
<dbReference type="EMBL" id="AK040207">
    <property type="protein sequence ID" value="BAE43308.1"/>
    <property type="molecule type" value="mRNA"/>
</dbReference>
<dbReference type="EMBL" id="AK134804">
    <property type="protein sequence ID" value="BAE22292.1"/>
    <property type="molecule type" value="mRNA"/>
</dbReference>
<dbReference type="EMBL" id="AK150309">
    <property type="protein sequence ID" value="BAE29457.1"/>
    <property type="status" value="ALT_INIT"/>
    <property type="molecule type" value="mRNA"/>
</dbReference>
<dbReference type="EMBL" id="AK220260">
    <property type="protein sequence ID" value="BAD90185.1"/>
    <property type="status" value="ALT_INIT"/>
    <property type="molecule type" value="mRNA"/>
</dbReference>
<dbReference type="EMBL" id="BC052910">
    <property type="protein sequence ID" value="AAH52910.1"/>
    <property type="molecule type" value="mRNA"/>
</dbReference>
<dbReference type="CCDS" id="CCDS48705.1">
    <molecule id="Q3UYC0-1"/>
</dbReference>
<dbReference type="CCDS" id="CCDS48706.1">
    <molecule id="Q3UYC0-2"/>
</dbReference>
<dbReference type="RefSeq" id="NP_001103688.1">
    <molecule id="Q3UYC0-1"/>
    <property type="nucleotide sequence ID" value="NM_001110218.1"/>
</dbReference>
<dbReference type="RefSeq" id="NP_795893.2">
    <molecule id="Q3UYC0-2"/>
    <property type="nucleotide sequence ID" value="NM_176919.4"/>
</dbReference>
<dbReference type="SMR" id="Q3UYC0"/>
<dbReference type="BioGRID" id="235293">
    <property type="interactions" value="2"/>
</dbReference>
<dbReference type="FunCoup" id="Q3UYC0">
    <property type="interactions" value="2306"/>
</dbReference>
<dbReference type="IntAct" id="Q3UYC0">
    <property type="interactions" value="1"/>
</dbReference>
<dbReference type="STRING" id="10090.ENSMUSP00000066561"/>
<dbReference type="GlyGen" id="Q3UYC0">
    <property type="glycosylation" value="2 sites"/>
</dbReference>
<dbReference type="iPTMnet" id="Q3UYC0"/>
<dbReference type="PhosphoSitePlus" id="Q3UYC0"/>
<dbReference type="SwissPalm" id="Q3UYC0"/>
<dbReference type="jPOST" id="Q3UYC0"/>
<dbReference type="PaxDb" id="10090-ENSMUSP00000066561"/>
<dbReference type="PeptideAtlas" id="Q3UYC0"/>
<dbReference type="ProteomicsDB" id="289380">
    <molecule id="Q3UYC0-1"/>
</dbReference>
<dbReference type="ProteomicsDB" id="289381">
    <molecule id="Q3UYC0-2"/>
</dbReference>
<dbReference type="Antibodypedia" id="53103">
    <property type="antibodies" value="151 antibodies from 22 providers"/>
</dbReference>
<dbReference type="DNASU" id="319468"/>
<dbReference type="Ensembl" id="ENSMUST00000067918.12">
    <molecule id="Q3UYC0-1"/>
    <property type="protein sequence ID" value="ENSMUSP00000066561.6"/>
    <property type="gene ID" value="ENSMUSG00000034613.13"/>
</dbReference>
<dbReference type="Ensembl" id="ENSMUST00000161487.8">
    <molecule id="Q3UYC0-2"/>
    <property type="protein sequence ID" value="ENSMUSP00000124982.2"/>
    <property type="gene ID" value="ENSMUSG00000034613.13"/>
</dbReference>
<dbReference type="GeneID" id="319468"/>
<dbReference type="KEGG" id="mmu:319468"/>
<dbReference type="UCSC" id="uc007hgf.2">
    <molecule id="Q3UYC0-1"/>
    <property type="organism name" value="mouse"/>
</dbReference>
<dbReference type="UCSC" id="uc007hgg.2">
    <molecule id="Q3UYC0-2"/>
    <property type="organism name" value="mouse"/>
</dbReference>
<dbReference type="AGR" id="MGI:2442087"/>
<dbReference type="CTD" id="57460"/>
<dbReference type="MGI" id="MGI:2442087">
    <property type="gene designation" value="Ppm1h"/>
</dbReference>
<dbReference type="VEuPathDB" id="HostDB:ENSMUSG00000034613"/>
<dbReference type="eggNOG" id="KOG1323">
    <property type="taxonomic scope" value="Eukaryota"/>
</dbReference>
<dbReference type="GeneTree" id="ENSGT00940000160095"/>
<dbReference type="HOGENOM" id="CLU_029072_1_0_1"/>
<dbReference type="InParanoid" id="Q3UYC0"/>
<dbReference type="OMA" id="VMAGGSN"/>
<dbReference type="OrthoDB" id="10264738at2759"/>
<dbReference type="PhylomeDB" id="Q3UYC0"/>
<dbReference type="TreeFam" id="TF314700"/>
<dbReference type="BioGRID-ORCS" id="319468">
    <property type="hits" value="2 hits in 76 CRISPR screens"/>
</dbReference>
<dbReference type="CD-CODE" id="CE726F99">
    <property type="entry name" value="Postsynaptic density"/>
</dbReference>
<dbReference type="ChiTaRS" id="Ppm1h">
    <property type="organism name" value="mouse"/>
</dbReference>
<dbReference type="PRO" id="PR:Q3UYC0"/>
<dbReference type="Proteomes" id="UP000000589">
    <property type="component" value="Chromosome 10"/>
</dbReference>
<dbReference type="RNAct" id="Q3UYC0">
    <property type="molecule type" value="protein"/>
</dbReference>
<dbReference type="Bgee" id="ENSMUSG00000034613">
    <property type="expression patterns" value="Expressed in ciliary body and 210 other cell types or tissues"/>
</dbReference>
<dbReference type="ExpressionAtlas" id="Q3UYC0">
    <property type="expression patterns" value="baseline and differential"/>
</dbReference>
<dbReference type="GO" id="GO:0005737">
    <property type="term" value="C:cytoplasm"/>
    <property type="evidence" value="ECO:0000250"/>
    <property type="project" value="UniProtKB"/>
</dbReference>
<dbReference type="GO" id="GO:0098978">
    <property type="term" value="C:glutamatergic synapse"/>
    <property type="evidence" value="ECO:0000314"/>
    <property type="project" value="SynGO"/>
</dbReference>
<dbReference type="GO" id="GO:0005654">
    <property type="term" value="C:nucleoplasm"/>
    <property type="evidence" value="ECO:0007669"/>
    <property type="project" value="Ensembl"/>
</dbReference>
<dbReference type="GO" id="GO:0005634">
    <property type="term" value="C:nucleus"/>
    <property type="evidence" value="ECO:0000250"/>
    <property type="project" value="UniProtKB"/>
</dbReference>
<dbReference type="GO" id="GO:0045202">
    <property type="term" value="C:synapse"/>
    <property type="evidence" value="ECO:0000314"/>
    <property type="project" value="SynGO"/>
</dbReference>
<dbReference type="GO" id="GO:0042802">
    <property type="term" value="F:identical protein binding"/>
    <property type="evidence" value="ECO:0007669"/>
    <property type="project" value="Ensembl"/>
</dbReference>
<dbReference type="GO" id="GO:0004721">
    <property type="term" value="F:phosphoprotein phosphatase activity"/>
    <property type="evidence" value="ECO:0000250"/>
    <property type="project" value="UniProtKB"/>
</dbReference>
<dbReference type="GO" id="GO:0004722">
    <property type="term" value="F:protein serine/threonine phosphatase activity"/>
    <property type="evidence" value="ECO:0007669"/>
    <property type="project" value="UniProtKB-EC"/>
</dbReference>
<dbReference type="CDD" id="cd00143">
    <property type="entry name" value="PP2Cc"/>
    <property type="match status" value="1"/>
</dbReference>
<dbReference type="Gene3D" id="3.60.40.10">
    <property type="entry name" value="PPM-type phosphatase domain"/>
    <property type="match status" value="1"/>
</dbReference>
<dbReference type="InterPro" id="IPR015655">
    <property type="entry name" value="PP2C"/>
</dbReference>
<dbReference type="InterPro" id="IPR036457">
    <property type="entry name" value="PPM-type-like_dom_sf"/>
</dbReference>
<dbReference type="InterPro" id="IPR001932">
    <property type="entry name" value="PPM-type_phosphatase-like_dom"/>
</dbReference>
<dbReference type="PANTHER" id="PTHR13832:SF287">
    <property type="entry name" value="PROTEIN PHOSPHATASE 1H"/>
    <property type="match status" value="1"/>
</dbReference>
<dbReference type="PANTHER" id="PTHR13832">
    <property type="entry name" value="PROTEIN PHOSPHATASE 2C"/>
    <property type="match status" value="1"/>
</dbReference>
<dbReference type="Pfam" id="PF00481">
    <property type="entry name" value="PP2C"/>
    <property type="match status" value="2"/>
</dbReference>
<dbReference type="SMART" id="SM00332">
    <property type="entry name" value="PP2Cc"/>
    <property type="match status" value="1"/>
</dbReference>
<dbReference type="SUPFAM" id="SSF81606">
    <property type="entry name" value="PP2C-like"/>
    <property type="match status" value="1"/>
</dbReference>
<dbReference type="PROSITE" id="PS51746">
    <property type="entry name" value="PPM_2"/>
    <property type="match status" value="1"/>
</dbReference>
<sequence>MLTRVKSAVANFMGGIMAGSSGSEHGGSGCGGSDLPLRFPYGRPEFLGLSQDEVECSADHIARPILILKETRRLPWATGYAEVINAGKSTHNEDQASCEVLTVKKKAGTITSTPNRNSKRRSSLPNGEGLQLKENSESEGISCHYWSLFDGHAGSGAAVVASRLLQHHITQQLQDIVEILKNSAILPPTCLGEEPESTPAHGRTLTRAASLRGGVGAPGSPSTPPTRFFTEKKIPHECLVIGALESAFKEMDLQIERERSAYNISGGCTALIVVCLLGKLYVANAGDSRAIIIRNGEIIPMSSEFTPETERQRLQYLAFMQPHLLGNEFTHLEFPRRVQRKELGKKMLYRDFNMTGWAYKTIEDDDLKFPLIYGEGKKARVMATIGVTRGLGDHDLKVHDSNIYIKPFLSSAPEVRVYDLSRYEHGADDVLILATDGLWDVLSNEEVAEAITQFLPNCDPDDPHRYTLAAQDLVMRARGVLKDRGWRISNDRLGSGDDISVYVIPLIHGNKLS</sequence>
<evidence type="ECO:0000250" key="1">
    <source>
        <dbReference type="UniProtKB" id="Q5M821"/>
    </source>
</evidence>
<evidence type="ECO:0000250" key="2">
    <source>
        <dbReference type="UniProtKB" id="Q9ULR3"/>
    </source>
</evidence>
<evidence type="ECO:0000255" key="3">
    <source>
        <dbReference type="PROSITE-ProRule" id="PRU01082"/>
    </source>
</evidence>
<evidence type="ECO:0000256" key="4">
    <source>
        <dbReference type="SAM" id="MobiDB-lite"/>
    </source>
</evidence>
<evidence type="ECO:0000303" key="5">
    <source>
    </source>
</evidence>
<evidence type="ECO:0000305" key="6"/>
<evidence type="ECO:0007744" key="7">
    <source>
    </source>
</evidence>
<evidence type="ECO:0007744" key="8">
    <source>
    </source>
</evidence>
<evidence type="ECO:0007744" key="9">
    <source>
    </source>
</evidence>
<gene>
    <name type="primary">Ppm1h</name>
    <name type="synonym">Kiaa1157</name>
</gene>
<organism>
    <name type="scientific">Mus musculus</name>
    <name type="common">Mouse</name>
    <dbReference type="NCBI Taxonomy" id="10090"/>
    <lineage>
        <taxon>Eukaryota</taxon>
        <taxon>Metazoa</taxon>
        <taxon>Chordata</taxon>
        <taxon>Craniata</taxon>
        <taxon>Vertebrata</taxon>
        <taxon>Euteleostomi</taxon>
        <taxon>Mammalia</taxon>
        <taxon>Eutheria</taxon>
        <taxon>Euarchontoglires</taxon>
        <taxon>Glires</taxon>
        <taxon>Rodentia</taxon>
        <taxon>Myomorpha</taxon>
        <taxon>Muroidea</taxon>
        <taxon>Muridae</taxon>
        <taxon>Murinae</taxon>
        <taxon>Mus</taxon>
        <taxon>Mus</taxon>
    </lineage>
</organism>
<protein>
    <recommendedName>
        <fullName>Protein phosphatase 1H</fullName>
        <ecNumber>3.1.3.16</ecNumber>
    </recommendedName>
</protein>
<name>PPM1H_MOUSE</name>
<reference key="1">
    <citation type="journal article" date="2005" name="Science">
        <title>The transcriptional landscape of the mammalian genome.</title>
        <authorList>
            <person name="Carninci P."/>
            <person name="Kasukawa T."/>
            <person name="Katayama S."/>
            <person name="Gough J."/>
            <person name="Frith M.C."/>
            <person name="Maeda N."/>
            <person name="Oyama R."/>
            <person name="Ravasi T."/>
            <person name="Lenhard B."/>
            <person name="Wells C."/>
            <person name="Kodzius R."/>
            <person name="Shimokawa K."/>
            <person name="Bajic V.B."/>
            <person name="Brenner S.E."/>
            <person name="Batalov S."/>
            <person name="Forrest A.R."/>
            <person name="Zavolan M."/>
            <person name="Davis M.J."/>
            <person name="Wilming L.G."/>
            <person name="Aidinis V."/>
            <person name="Allen J.E."/>
            <person name="Ambesi-Impiombato A."/>
            <person name="Apweiler R."/>
            <person name="Aturaliya R.N."/>
            <person name="Bailey T.L."/>
            <person name="Bansal M."/>
            <person name="Baxter L."/>
            <person name="Beisel K.W."/>
            <person name="Bersano T."/>
            <person name="Bono H."/>
            <person name="Chalk A.M."/>
            <person name="Chiu K.P."/>
            <person name="Choudhary V."/>
            <person name="Christoffels A."/>
            <person name="Clutterbuck D.R."/>
            <person name="Crowe M.L."/>
            <person name="Dalla E."/>
            <person name="Dalrymple B.P."/>
            <person name="de Bono B."/>
            <person name="Della Gatta G."/>
            <person name="di Bernardo D."/>
            <person name="Down T."/>
            <person name="Engstrom P."/>
            <person name="Fagiolini M."/>
            <person name="Faulkner G."/>
            <person name="Fletcher C.F."/>
            <person name="Fukushima T."/>
            <person name="Furuno M."/>
            <person name="Futaki S."/>
            <person name="Gariboldi M."/>
            <person name="Georgii-Hemming P."/>
            <person name="Gingeras T.R."/>
            <person name="Gojobori T."/>
            <person name="Green R.E."/>
            <person name="Gustincich S."/>
            <person name="Harbers M."/>
            <person name="Hayashi Y."/>
            <person name="Hensch T.K."/>
            <person name="Hirokawa N."/>
            <person name="Hill D."/>
            <person name="Huminiecki L."/>
            <person name="Iacono M."/>
            <person name="Ikeo K."/>
            <person name="Iwama A."/>
            <person name="Ishikawa T."/>
            <person name="Jakt M."/>
            <person name="Kanapin A."/>
            <person name="Katoh M."/>
            <person name="Kawasawa Y."/>
            <person name="Kelso J."/>
            <person name="Kitamura H."/>
            <person name="Kitano H."/>
            <person name="Kollias G."/>
            <person name="Krishnan S.P."/>
            <person name="Kruger A."/>
            <person name="Kummerfeld S.K."/>
            <person name="Kurochkin I.V."/>
            <person name="Lareau L.F."/>
            <person name="Lazarevic D."/>
            <person name="Lipovich L."/>
            <person name="Liu J."/>
            <person name="Liuni S."/>
            <person name="McWilliam S."/>
            <person name="Madan Babu M."/>
            <person name="Madera M."/>
            <person name="Marchionni L."/>
            <person name="Matsuda H."/>
            <person name="Matsuzawa S."/>
            <person name="Miki H."/>
            <person name="Mignone F."/>
            <person name="Miyake S."/>
            <person name="Morris K."/>
            <person name="Mottagui-Tabar S."/>
            <person name="Mulder N."/>
            <person name="Nakano N."/>
            <person name="Nakauchi H."/>
            <person name="Ng P."/>
            <person name="Nilsson R."/>
            <person name="Nishiguchi S."/>
            <person name="Nishikawa S."/>
            <person name="Nori F."/>
            <person name="Ohara O."/>
            <person name="Okazaki Y."/>
            <person name="Orlando V."/>
            <person name="Pang K.C."/>
            <person name="Pavan W.J."/>
            <person name="Pavesi G."/>
            <person name="Pesole G."/>
            <person name="Petrovsky N."/>
            <person name="Piazza S."/>
            <person name="Reed J."/>
            <person name="Reid J.F."/>
            <person name="Ring B.Z."/>
            <person name="Ringwald M."/>
            <person name="Rost B."/>
            <person name="Ruan Y."/>
            <person name="Salzberg S.L."/>
            <person name="Sandelin A."/>
            <person name="Schneider C."/>
            <person name="Schoenbach C."/>
            <person name="Sekiguchi K."/>
            <person name="Semple C.A."/>
            <person name="Seno S."/>
            <person name="Sessa L."/>
            <person name="Sheng Y."/>
            <person name="Shibata Y."/>
            <person name="Shimada H."/>
            <person name="Shimada K."/>
            <person name="Silva D."/>
            <person name="Sinclair B."/>
            <person name="Sperling S."/>
            <person name="Stupka E."/>
            <person name="Sugiura K."/>
            <person name="Sultana R."/>
            <person name="Takenaka Y."/>
            <person name="Taki K."/>
            <person name="Tammoja K."/>
            <person name="Tan S.L."/>
            <person name="Tang S."/>
            <person name="Taylor M.S."/>
            <person name="Tegner J."/>
            <person name="Teichmann S.A."/>
            <person name="Ueda H.R."/>
            <person name="van Nimwegen E."/>
            <person name="Verardo R."/>
            <person name="Wei C.L."/>
            <person name="Yagi K."/>
            <person name="Yamanishi H."/>
            <person name="Zabarovsky E."/>
            <person name="Zhu S."/>
            <person name="Zimmer A."/>
            <person name="Hide W."/>
            <person name="Bult C."/>
            <person name="Grimmond S.M."/>
            <person name="Teasdale R.D."/>
            <person name="Liu E.T."/>
            <person name="Brusic V."/>
            <person name="Quackenbush J."/>
            <person name="Wahlestedt C."/>
            <person name="Mattick J.S."/>
            <person name="Hume D.A."/>
            <person name="Kai C."/>
            <person name="Sasaki D."/>
            <person name="Tomaru Y."/>
            <person name="Fukuda S."/>
            <person name="Kanamori-Katayama M."/>
            <person name="Suzuki M."/>
            <person name="Aoki J."/>
            <person name="Arakawa T."/>
            <person name="Iida J."/>
            <person name="Imamura K."/>
            <person name="Itoh M."/>
            <person name="Kato T."/>
            <person name="Kawaji H."/>
            <person name="Kawagashira N."/>
            <person name="Kawashima T."/>
            <person name="Kojima M."/>
            <person name="Kondo S."/>
            <person name="Konno H."/>
            <person name="Nakano K."/>
            <person name="Ninomiya N."/>
            <person name="Nishio T."/>
            <person name="Okada M."/>
            <person name="Plessy C."/>
            <person name="Shibata K."/>
            <person name="Shiraki T."/>
            <person name="Suzuki S."/>
            <person name="Tagami M."/>
            <person name="Waki K."/>
            <person name="Watahiki A."/>
            <person name="Okamura-Oho Y."/>
            <person name="Suzuki H."/>
            <person name="Kawai J."/>
            <person name="Hayashizaki Y."/>
        </authorList>
    </citation>
    <scope>NUCLEOTIDE SEQUENCE [LARGE SCALE MRNA] (ISOFORMS 1 AND 2)</scope>
    <source>
        <strain>C57BL/6J</strain>
        <tissue>Bone marrow</tissue>
        <tissue>Head</tissue>
        <tissue>Medulla oblongata</tissue>
        <tissue>Thymus</tissue>
    </source>
</reference>
<reference key="2">
    <citation type="submission" date="2005-02" db="EMBL/GenBank/DDBJ databases">
        <title>Prediction of the coding sequences of mouse homologues of KIAA gene. The complete nucleotide sequences of mouse KIAA-homologous cDNAs identified by screening of terminal sequences of cDNA clones randomly sampled from size-fractionated libraries.</title>
        <authorList>
            <person name="Okazaki N."/>
            <person name="Kikuno R.F."/>
            <person name="Ohara R."/>
            <person name="Inamoto S."/>
            <person name="Nagase T."/>
            <person name="Ohara O."/>
            <person name="Koga H."/>
        </authorList>
    </citation>
    <scope>NUCLEOTIDE SEQUENCE [LARGE SCALE MRNA] (ISOFORM 1)</scope>
    <source>
        <tissue>Pancreatic islet</tissue>
    </source>
</reference>
<reference key="3">
    <citation type="journal article" date="2004" name="Genome Res.">
        <title>The status, quality, and expansion of the NIH full-length cDNA project: the Mammalian Gene Collection (MGC).</title>
        <authorList>
            <consortium name="The MGC Project Team"/>
        </authorList>
    </citation>
    <scope>NUCLEOTIDE SEQUENCE [LARGE SCALE MRNA] OF 90-513 (ISOFORM 1)</scope>
    <source>
        <strain>C57BL/6NCr</strain>
        <tissue>Hematopoietic stem cell</tissue>
    </source>
</reference>
<reference key="4">
    <citation type="journal article" date="2009" name="Immunity">
        <title>The phagosomal proteome in interferon-gamma-activated macrophages.</title>
        <authorList>
            <person name="Trost M."/>
            <person name="English L."/>
            <person name="Lemieux S."/>
            <person name="Courcelles M."/>
            <person name="Desjardins M."/>
            <person name="Thibault P."/>
        </authorList>
    </citation>
    <scope>PHOSPHORYLATION [LARGE SCALE ANALYSIS] AT SER-123</scope>
    <scope>IDENTIFICATION BY MASS SPECTROMETRY [LARGE SCALE ANALYSIS]</scope>
</reference>
<reference key="5">
    <citation type="journal article" date="2010" name="Cell">
        <title>A tissue-specific atlas of mouse protein phosphorylation and expression.</title>
        <authorList>
            <person name="Huttlin E.L."/>
            <person name="Jedrychowski M.P."/>
            <person name="Elias J.E."/>
            <person name="Goswami T."/>
            <person name="Rad R."/>
            <person name="Beausoleil S.A."/>
            <person name="Villen J."/>
            <person name="Haas W."/>
            <person name="Sowa M.E."/>
            <person name="Gygi S.P."/>
        </authorList>
    </citation>
    <scope>PHOSPHORYLATION [LARGE SCALE ANALYSIS] AT SER-7; SER-123; SER-220 AND THR-223</scope>
    <scope>IDENTIFICATION BY MASS SPECTROMETRY [LARGE SCALE ANALYSIS]</scope>
    <source>
        <tissue>Brain</tissue>
        <tissue>Kidney</tissue>
        <tissue>Lung</tissue>
    </source>
</reference>
<reference key="6">
    <citation type="journal article" date="2014" name="Mol. Cell. Proteomics">
        <title>Immunoaffinity enrichment and mass spectrometry analysis of protein methylation.</title>
        <authorList>
            <person name="Guo A."/>
            <person name="Gu H."/>
            <person name="Zhou J."/>
            <person name="Mulhern D."/>
            <person name="Wang Y."/>
            <person name="Lee K.A."/>
            <person name="Yang V."/>
            <person name="Aguiar M."/>
            <person name="Kornhauser J."/>
            <person name="Jia X."/>
            <person name="Ren J."/>
            <person name="Beausoleil S.A."/>
            <person name="Silva J.C."/>
            <person name="Vemulapalli V."/>
            <person name="Bedford M.T."/>
            <person name="Comb M.J."/>
        </authorList>
    </citation>
    <scope>METHYLATION [LARGE SCALE ANALYSIS] AT ARG-212</scope>
    <scope>IDENTIFICATION BY MASS SPECTROMETRY [LARGE SCALE ANALYSIS]</scope>
    <source>
        <tissue>Brain</tissue>
        <tissue>Embryo</tissue>
    </source>
</reference>
<proteinExistence type="evidence at protein level"/>
<feature type="chain" id="PRO_0000286604" description="Protein phosphatase 1H">
    <location>
        <begin position="1"/>
        <end position="513"/>
    </location>
</feature>
<feature type="domain" description="PPM-type phosphatase" evidence="3">
    <location>
        <begin position="77"/>
        <end position="506"/>
    </location>
</feature>
<feature type="region of interest" description="Disordered" evidence="4">
    <location>
        <begin position="109"/>
        <end position="133"/>
    </location>
</feature>
<feature type="modified residue" description="Phosphoserine" evidence="8">
    <location>
        <position position="7"/>
    </location>
</feature>
<feature type="modified residue" description="Phosphothreonine" evidence="1">
    <location>
        <position position="113"/>
    </location>
</feature>
<feature type="modified residue" description="Phosphoserine" evidence="7 8">
    <location>
        <position position="123"/>
    </location>
</feature>
<feature type="modified residue" description="Phosphoserine" evidence="2">
    <location>
        <position position="210"/>
    </location>
</feature>
<feature type="modified residue" description="Omega-N-methylarginine" evidence="9">
    <location>
        <position position="212"/>
    </location>
</feature>
<feature type="modified residue" description="Phosphoserine" evidence="8">
    <location>
        <position position="220"/>
    </location>
</feature>
<feature type="modified residue" description="Phosphothreonine" evidence="8">
    <location>
        <position position="223"/>
    </location>
</feature>
<feature type="modified residue" description="Phosphoserine" evidence="2">
    <location>
        <position position="421"/>
    </location>
</feature>
<feature type="splice variant" id="VSP_025121" description="In isoform 2." evidence="5">
    <original>YTLA</original>
    <variation>FVPL</variation>
    <location>
        <begin position="466"/>
        <end position="469"/>
    </location>
</feature>
<feature type="splice variant" id="VSP_025122" description="In isoform 2." evidence="5">
    <location>
        <begin position="470"/>
        <end position="513"/>
    </location>
</feature>
<feature type="sequence conflict" description="In Ref. 3; AAH52910." evidence="6" ref="3">
    <original>THNE</original>
    <variation>EVIP</variation>
    <location>
        <begin position="90"/>
        <end position="93"/>
    </location>
</feature>
<feature type="sequence conflict" description="In Ref. 2; BAD90185." evidence="6" ref="2">
    <original>L</original>
    <variation>R</variation>
    <location>
        <position position="130"/>
    </location>
</feature>
<feature type="sequence conflict" description="In Ref. 3; AAH52910." evidence="6" ref="3">
    <original>H</original>
    <variation>P</variation>
    <location>
        <position position="168"/>
    </location>
</feature>
<feature type="sequence conflict" description="In Ref. 1; BAE43308." evidence="6" ref="1">
    <original>T</original>
    <variation>A</variation>
    <location>
        <position position="198"/>
    </location>
</feature>
<feature type="sequence conflict" description="In Ref. 1; BAE29457." evidence="6" ref="1">
    <original>S</original>
    <variation>G</variation>
    <location>
        <position position="260"/>
    </location>
</feature>
<feature type="sequence conflict" description="In Ref. 3; AAH52910." evidence="6" ref="3">
    <original>P</original>
    <variation>L</variation>
    <location>
        <position position="456"/>
    </location>
</feature>
<keyword id="KW-0025">Alternative splicing</keyword>
<keyword id="KW-0963">Cytoplasm</keyword>
<keyword id="KW-0378">Hydrolase</keyword>
<keyword id="KW-0488">Methylation</keyword>
<keyword id="KW-0539">Nucleus</keyword>
<keyword id="KW-0597">Phosphoprotein</keyword>
<keyword id="KW-0904">Protein phosphatase</keyword>
<keyword id="KW-1185">Reference proteome</keyword>